<keyword id="KW-0378">Hydrolase</keyword>
<keyword id="KW-0460">Magnesium</keyword>
<keyword id="KW-0479">Metal-binding</keyword>
<keyword id="KW-0546">Nucleotide metabolism</keyword>
<keyword id="KW-0547">Nucleotide-binding</keyword>
<organism>
    <name type="scientific">Bifidobacterium longum subsp. infantis (strain ATCC 15697 / DSM 20088 / JCM 1222 / NCTC 11817 / S12)</name>
    <dbReference type="NCBI Taxonomy" id="391904"/>
    <lineage>
        <taxon>Bacteria</taxon>
        <taxon>Bacillati</taxon>
        <taxon>Actinomycetota</taxon>
        <taxon>Actinomycetes</taxon>
        <taxon>Bifidobacteriales</taxon>
        <taxon>Bifidobacteriaceae</taxon>
        <taxon>Bifidobacterium</taxon>
    </lineage>
</organism>
<name>IXTPA_BIFLS</name>
<gene>
    <name type="ordered locus">Blon_0412</name>
    <name type="ordered locus">BLIJ_0420</name>
</gene>
<comment type="function">
    <text evidence="1">Pyrophosphatase that catalyzes the hydrolysis of nucleoside triphosphates to their monophosphate derivatives, with a high preference for the non-canonical purine nucleotides XTP (xanthosine triphosphate), dITP (deoxyinosine triphosphate) and ITP. Seems to function as a house-cleaning enzyme that removes non-canonical purine nucleotides from the nucleotide pool, thus preventing their incorporation into DNA/RNA and avoiding chromosomal lesions.</text>
</comment>
<comment type="catalytic activity">
    <reaction evidence="1">
        <text>XTP + H2O = XMP + diphosphate + H(+)</text>
        <dbReference type="Rhea" id="RHEA:28610"/>
        <dbReference type="ChEBI" id="CHEBI:15377"/>
        <dbReference type="ChEBI" id="CHEBI:15378"/>
        <dbReference type="ChEBI" id="CHEBI:33019"/>
        <dbReference type="ChEBI" id="CHEBI:57464"/>
        <dbReference type="ChEBI" id="CHEBI:61314"/>
        <dbReference type="EC" id="3.6.1.66"/>
    </reaction>
</comment>
<comment type="catalytic activity">
    <reaction evidence="1">
        <text>dITP + H2O = dIMP + diphosphate + H(+)</text>
        <dbReference type="Rhea" id="RHEA:28342"/>
        <dbReference type="ChEBI" id="CHEBI:15377"/>
        <dbReference type="ChEBI" id="CHEBI:15378"/>
        <dbReference type="ChEBI" id="CHEBI:33019"/>
        <dbReference type="ChEBI" id="CHEBI:61194"/>
        <dbReference type="ChEBI" id="CHEBI:61382"/>
        <dbReference type="EC" id="3.6.1.66"/>
    </reaction>
</comment>
<comment type="catalytic activity">
    <reaction evidence="1">
        <text>ITP + H2O = IMP + diphosphate + H(+)</text>
        <dbReference type="Rhea" id="RHEA:29399"/>
        <dbReference type="ChEBI" id="CHEBI:15377"/>
        <dbReference type="ChEBI" id="CHEBI:15378"/>
        <dbReference type="ChEBI" id="CHEBI:33019"/>
        <dbReference type="ChEBI" id="CHEBI:58053"/>
        <dbReference type="ChEBI" id="CHEBI:61402"/>
        <dbReference type="EC" id="3.6.1.66"/>
    </reaction>
</comment>
<comment type="cofactor">
    <cofactor evidence="1">
        <name>Mg(2+)</name>
        <dbReference type="ChEBI" id="CHEBI:18420"/>
    </cofactor>
    <text evidence="1">Binds 1 Mg(2+) ion per subunit.</text>
</comment>
<comment type="subunit">
    <text evidence="1">Homodimer.</text>
</comment>
<comment type="similarity">
    <text evidence="1">Belongs to the HAM1 NTPase family.</text>
</comment>
<proteinExistence type="inferred from homology"/>
<reference key="1">
    <citation type="journal article" date="2008" name="Proc. Natl. Acad. Sci. U.S.A.">
        <title>The genome sequence of Bifidobacterium longum subsp. infantis reveals adaptations for milk utilization within the infant microbiome.</title>
        <authorList>
            <person name="Sela D.A."/>
            <person name="Chapman J."/>
            <person name="Adeuya A."/>
            <person name="Kim J.H."/>
            <person name="Chen F."/>
            <person name="Whitehead T.R."/>
            <person name="Lapidus A."/>
            <person name="Rokhsar D.S."/>
            <person name="Lebrilla C.B."/>
            <person name="German J.B."/>
            <person name="Price N.P."/>
            <person name="Richardson P.M."/>
            <person name="Mills D.A."/>
        </authorList>
    </citation>
    <scope>NUCLEOTIDE SEQUENCE [LARGE SCALE GENOMIC DNA]</scope>
    <source>
        <strain>ATCC 15697 / DSM 20088 / JCM 1222 / NCTC 11817 / S12</strain>
    </source>
</reference>
<reference key="2">
    <citation type="journal article" date="2011" name="Nature">
        <title>Bifidobacteria can protect from enteropathogenic infection through production of acetate.</title>
        <authorList>
            <person name="Fukuda S."/>
            <person name="Toh H."/>
            <person name="Hase K."/>
            <person name="Oshima K."/>
            <person name="Nakanishi Y."/>
            <person name="Yoshimura K."/>
            <person name="Tobe T."/>
            <person name="Clarke J.M."/>
            <person name="Topping D.L."/>
            <person name="Suzuki T."/>
            <person name="Taylor T.D."/>
            <person name="Itoh K."/>
            <person name="Kikuchi J."/>
            <person name="Morita H."/>
            <person name="Hattori M."/>
            <person name="Ohno H."/>
        </authorList>
    </citation>
    <scope>NUCLEOTIDE SEQUENCE [LARGE SCALE GENOMIC DNA]</scope>
    <source>
        <strain>ATCC 15697 / DSM 20088 / JCM 1222 / NCTC 11817 / S12</strain>
    </source>
</reference>
<dbReference type="EC" id="3.6.1.66" evidence="1"/>
<dbReference type="EMBL" id="CP001095">
    <property type="protein sequence ID" value="ACJ51533.1"/>
    <property type="molecule type" value="Genomic_DNA"/>
</dbReference>
<dbReference type="EMBL" id="AP010889">
    <property type="protein sequence ID" value="BAJ68014.1"/>
    <property type="molecule type" value="Genomic_DNA"/>
</dbReference>
<dbReference type="RefSeq" id="WP_012576833.1">
    <property type="nucleotide sequence ID" value="NC_011593.1"/>
</dbReference>
<dbReference type="SMR" id="B7GN27"/>
<dbReference type="KEGG" id="bln:Blon_0412"/>
<dbReference type="KEGG" id="blon:BLIJ_0420"/>
<dbReference type="PATRIC" id="fig|391904.8.peg.424"/>
<dbReference type="HOGENOM" id="CLU_082080_0_1_11"/>
<dbReference type="Proteomes" id="UP000001360">
    <property type="component" value="Chromosome"/>
</dbReference>
<dbReference type="GO" id="GO:0005829">
    <property type="term" value="C:cytosol"/>
    <property type="evidence" value="ECO:0007669"/>
    <property type="project" value="TreeGrafter"/>
</dbReference>
<dbReference type="GO" id="GO:0035870">
    <property type="term" value="F:dITP diphosphatase activity"/>
    <property type="evidence" value="ECO:0007669"/>
    <property type="project" value="RHEA"/>
</dbReference>
<dbReference type="GO" id="GO:0036220">
    <property type="term" value="F:ITP diphosphatase activity"/>
    <property type="evidence" value="ECO:0007669"/>
    <property type="project" value="UniProtKB-EC"/>
</dbReference>
<dbReference type="GO" id="GO:0046872">
    <property type="term" value="F:metal ion binding"/>
    <property type="evidence" value="ECO:0007669"/>
    <property type="project" value="UniProtKB-KW"/>
</dbReference>
<dbReference type="GO" id="GO:0000166">
    <property type="term" value="F:nucleotide binding"/>
    <property type="evidence" value="ECO:0007669"/>
    <property type="project" value="UniProtKB-KW"/>
</dbReference>
<dbReference type="GO" id="GO:0017111">
    <property type="term" value="F:ribonucleoside triphosphate phosphatase activity"/>
    <property type="evidence" value="ECO:0007669"/>
    <property type="project" value="InterPro"/>
</dbReference>
<dbReference type="GO" id="GO:0036222">
    <property type="term" value="F:XTP diphosphatase activity"/>
    <property type="evidence" value="ECO:0007669"/>
    <property type="project" value="RHEA"/>
</dbReference>
<dbReference type="GO" id="GO:0009117">
    <property type="term" value="P:nucleotide metabolic process"/>
    <property type="evidence" value="ECO:0007669"/>
    <property type="project" value="UniProtKB-KW"/>
</dbReference>
<dbReference type="GO" id="GO:0009146">
    <property type="term" value="P:purine nucleoside triphosphate catabolic process"/>
    <property type="evidence" value="ECO:0007669"/>
    <property type="project" value="UniProtKB-UniRule"/>
</dbReference>
<dbReference type="CDD" id="cd00515">
    <property type="entry name" value="HAM1"/>
    <property type="match status" value="1"/>
</dbReference>
<dbReference type="Gene3D" id="3.90.950.10">
    <property type="match status" value="1"/>
</dbReference>
<dbReference type="HAMAP" id="MF_01405">
    <property type="entry name" value="Non_canon_purine_NTPase"/>
    <property type="match status" value="1"/>
</dbReference>
<dbReference type="InterPro" id="IPR020922">
    <property type="entry name" value="dITP/XTP_pyrophosphatase"/>
</dbReference>
<dbReference type="InterPro" id="IPR029001">
    <property type="entry name" value="ITPase-like_fam"/>
</dbReference>
<dbReference type="InterPro" id="IPR002637">
    <property type="entry name" value="RdgB/HAM1"/>
</dbReference>
<dbReference type="PANTHER" id="PTHR11067:SF9">
    <property type="entry name" value="INOSINE TRIPHOSPHATE PYROPHOSPHATASE"/>
    <property type="match status" value="1"/>
</dbReference>
<dbReference type="PANTHER" id="PTHR11067">
    <property type="entry name" value="INOSINE TRIPHOSPHATE PYROPHOSPHATASE/HAM1 PROTEIN"/>
    <property type="match status" value="1"/>
</dbReference>
<dbReference type="Pfam" id="PF01725">
    <property type="entry name" value="Ham1p_like"/>
    <property type="match status" value="2"/>
</dbReference>
<dbReference type="SUPFAM" id="SSF52972">
    <property type="entry name" value="ITPase-like"/>
    <property type="match status" value="1"/>
</dbReference>
<sequence length="252" mass="26368">MQIVVATHNEGKLVEIRRILEEDLGVDAENIELVSAGSLHLPDPVETGVTFQENALLKARAVAIRTGLPAVADDSGLIVDVMGNAPGILSARWAGAHGHDKANNALLLAQIGDIPDDKRTARFRCAAALVVPDTEAGADVTGGVAADGITVHTTAADGSTAPVHARYAIKSETVELGDMPGRIIREARGEHGFGYDPLFVPDDQPAGRVSTEPDHEGEPLTSAEMTSAEKNAISHRGKALKALVPAIEALLH</sequence>
<protein>
    <recommendedName>
        <fullName evidence="1">dITP/XTP pyrophosphatase</fullName>
        <ecNumber evidence="1">3.6.1.66</ecNumber>
    </recommendedName>
    <alternativeName>
        <fullName evidence="1">Non-canonical purine NTP pyrophosphatase</fullName>
    </alternativeName>
    <alternativeName>
        <fullName evidence="1">Non-standard purine NTP pyrophosphatase</fullName>
    </alternativeName>
    <alternativeName>
        <fullName evidence="1">Nucleoside-triphosphate diphosphatase</fullName>
    </alternativeName>
    <alternativeName>
        <fullName evidence="1">Nucleoside-triphosphate pyrophosphatase</fullName>
        <shortName evidence="1">NTPase</shortName>
    </alternativeName>
</protein>
<accession>B7GN27</accession>
<accession>E8MPT9</accession>
<evidence type="ECO:0000255" key="1">
    <source>
        <dbReference type="HAMAP-Rule" id="MF_01405"/>
    </source>
</evidence>
<evidence type="ECO:0000256" key="2">
    <source>
        <dbReference type="SAM" id="MobiDB-lite"/>
    </source>
</evidence>
<feature type="chain" id="PRO_1000184578" description="dITP/XTP pyrophosphatase">
    <location>
        <begin position="1"/>
        <end position="252"/>
    </location>
</feature>
<feature type="region of interest" description="Disordered" evidence="2">
    <location>
        <begin position="201"/>
        <end position="224"/>
    </location>
</feature>
<feature type="active site" description="Proton acceptor" evidence="1">
    <location>
        <position position="74"/>
    </location>
</feature>
<feature type="binding site" evidence="1">
    <location>
        <begin position="7"/>
        <end position="12"/>
    </location>
    <ligand>
        <name>substrate</name>
    </ligand>
</feature>
<feature type="binding site" evidence="1">
    <location>
        <position position="74"/>
    </location>
    <ligand>
        <name>Mg(2+)</name>
        <dbReference type="ChEBI" id="CHEBI:18420"/>
    </ligand>
</feature>
<feature type="binding site" evidence="1">
    <location>
        <position position="75"/>
    </location>
    <ligand>
        <name>substrate</name>
    </ligand>
</feature>
<feature type="binding site" evidence="1">
    <location>
        <begin position="193"/>
        <end position="196"/>
    </location>
    <ligand>
        <name>substrate</name>
    </ligand>
</feature>
<feature type="binding site" evidence="1">
    <location>
        <position position="230"/>
    </location>
    <ligand>
        <name>substrate</name>
    </ligand>
</feature>
<feature type="binding site" evidence="1">
    <location>
        <begin position="235"/>
        <end position="236"/>
    </location>
    <ligand>
        <name>substrate</name>
    </ligand>
</feature>